<organism>
    <name type="scientific">Marchantia polymorpha</name>
    <name type="common">Common liverwort</name>
    <name type="synonym">Marchantia aquatica</name>
    <dbReference type="NCBI Taxonomy" id="3197"/>
    <lineage>
        <taxon>Eukaryota</taxon>
        <taxon>Viridiplantae</taxon>
        <taxon>Streptophyta</taxon>
        <taxon>Embryophyta</taxon>
        <taxon>Marchantiophyta</taxon>
        <taxon>Marchantiopsida</taxon>
        <taxon>Marchantiidae</taxon>
        <taxon>Marchantiales</taxon>
        <taxon>Marchantiaceae</taxon>
        <taxon>Marchantia</taxon>
    </lineage>
</organism>
<accession>P12208</accession>
<feature type="chain" id="PRO_0000179744" description="ATP-dependent Clp protease proteolytic subunit">
    <location>
        <begin position="1"/>
        <end position="203"/>
    </location>
</feature>
<feature type="active site" description="Nucleophile" evidence="1">
    <location>
        <position position="101"/>
    </location>
</feature>
<feature type="active site" evidence="1">
    <location>
        <position position="126"/>
    </location>
</feature>
<feature type="sequence conflict" description="In Ref. 3." evidence="2" ref="3">
    <original>A</original>
    <variation>E</variation>
    <location>
        <position position="184"/>
    </location>
</feature>
<dbReference type="EC" id="3.4.21.92" evidence="1"/>
<dbReference type="EMBL" id="X04465">
    <property type="protein sequence ID" value="CAA28109.1"/>
    <property type="molecule type" value="Genomic_DNA"/>
</dbReference>
<dbReference type="EMBL" id="X03661">
    <property type="protein sequence ID" value="CAA27296.1"/>
    <property type="molecule type" value="Genomic_DNA"/>
</dbReference>
<dbReference type="PIR" id="S01545">
    <property type="entry name" value="A05056"/>
</dbReference>
<dbReference type="RefSeq" id="NP_039323.1">
    <property type="nucleotide sequence ID" value="NC_001319.1"/>
</dbReference>
<dbReference type="SMR" id="P12208"/>
<dbReference type="MEROPS" id="S14.002"/>
<dbReference type="GeneID" id="2702606"/>
<dbReference type="BRENDA" id="3.4.21.92">
    <property type="organism ID" value="3182"/>
</dbReference>
<dbReference type="GO" id="GO:0009570">
    <property type="term" value="C:chloroplast stroma"/>
    <property type="evidence" value="ECO:0007669"/>
    <property type="project" value="UniProtKB-SubCell"/>
</dbReference>
<dbReference type="GO" id="GO:0004176">
    <property type="term" value="F:ATP-dependent peptidase activity"/>
    <property type="evidence" value="ECO:0007669"/>
    <property type="project" value="InterPro"/>
</dbReference>
<dbReference type="GO" id="GO:0004252">
    <property type="term" value="F:serine-type endopeptidase activity"/>
    <property type="evidence" value="ECO:0007669"/>
    <property type="project" value="UniProtKB-UniRule"/>
</dbReference>
<dbReference type="GO" id="GO:0006508">
    <property type="term" value="P:proteolysis"/>
    <property type="evidence" value="ECO:0007669"/>
    <property type="project" value="UniProtKB-UniRule"/>
</dbReference>
<dbReference type="CDD" id="cd07017">
    <property type="entry name" value="S14_ClpP_2"/>
    <property type="match status" value="1"/>
</dbReference>
<dbReference type="FunFam" id="3.90.226.10:FF:000006">
    <property type="entry name" value="ATP-dependent Clp protease proteolytic subunit"/>
    <property type="match status" value="1"/>
</dbReference>
<dbReference type="Gene3D" id="3.90.226.10">
    <property type="entry name" value="2-enoyl-CoA Hydratase, Chain A, domain 1"/>
    <property type="match status" value="1"/>
</dbReference>
<dbReference type="HAMAP" id="MF_00444">
    <property type="entry name" value="ClpP"/>
    <property type="match status" value="1"/>
</dbReference>
<dbReference type="InterPro" id="IPR001907">
    <property type="entry name" value="ClpP"/>
</dbReference>
<dbReference type="InterPro" id="IPR029045">
    <property type="entry name" value="ClpP/crotonase-like_dom_sf"/>
</dbReference>
<dbReference type="InterPro" id="IPR023562">
    <property type="entry name" value="ClpP/TepA"/>
</dbReference>
<dbReference type="InterPro" id="IPR033135">
    <property type="entry name" value="ClpP_His_AS"/>
</dbReference>
<dbReference type="InterPro" id="IPR018215">
    <property type="entry name" value="ClpP_Ser_AS"/>
</dbReference>
<dbReference type="PANTHER" id="PTHR10381">
    <property type="entry name" value="ATP-DEPENDENT CLP PROTEASE PROTEOLYTIC SUBUNIT"/>
    <property type="match status" value="1"/>
</dbReference>
<dbReference type="PANTHER" id="PTHR10381:SF15">
    <property type="entry name" value="CHLOROPLASTIC ATP-DEPENDENT CLP PROTEASE PROTEOLYTIC SUBUNIT 1"/>
    <property type="match status" value="1"/>
</dbReference>
<dbReference type="Pfam" id="PF00574">
    <property type="entry name" value="CLP_protease"/>
    <property type="match status" value="1"/>
</dbReference>
<dbReference type="PRINTS" id="PR00127">
    <property type="entry name" value="CLPPROTEASEP"/>
</dbReference>
<dbReference type="SUPFAM" id="SSF52096">
    <property type="entry name" value="ClpP/crotonase"/>
    <property type="match status" value="1"/>
</dbReference>
<dbReference type="PROSITE" id="PS00382">
    <property type="entry name" value="CLP_PROTEASE_HIS"/>
    <property type="match status" value="1"/>
</dbReference>
<dbReference type="PROSITE" id="PS00381">
    <property type="entry name" value="CLP_PROTEASE_SER"/>
    <property type="match status" value="1"/>
</dbReference>
<proteinExistence type="inferred from homology"/>
<keyword id="KW-0150">Chloroplast</keyword>
<keyword id="KW-0378">Hydrolase</keyword>
<keyword id="KW-0934">Plastid</keyword>
<keyword id="KW-0645">Protease</keyword>
<keyword id="KW-0720">Serine protease</keyword>
<name>CLPP_MARPO</name>
<comment type="function">
    <text evidence="1">Cleaves peptides in various proteins in a process that requires ATP hydrolysis. Has a chymotrypsin-like activity. Plays a major role in the degradation of misfolded proteins.</text>
</comment>
<comment type="catalytic activity">
    <reaction evidence="1">
        <text>Hydrolysis of proteins to small peptides in the presence of ATP and magnesium. alpha-casein is the usual test substrate. In the absence of ATP, only oligopeptides shorter than five residues are hydrolyzed (such as succinyl-Leu-Tyr-|-NHMec, and Leu-Tyr-Leu-|-Tyr-Trp, in which cleavage of the -Tyr-|-Leu- and -Tyr-|-Trp bonds also occurs).</text>
        <dbReference type="EC" id="3.4.21.92"/>
    </reaction>
</comment>
<comment type="subunit">
    <text>Component of the chloroplastic Clp protease core complex.</text>
</comment>
<comment type="subcellular location">
    <subcellularLocation>
        <location evidence="1">Plastid</location>
        <location evidence="1">Chloroplast stroma</location>
    </subcellularLocation>
</comment>
<comment type="similarity">
    <text evidence="1">Belongs to the peptidase S14 family.</text>
</comment>
<protein>
    <recommendedName>
        <fullName evidence="1">ATP-dependent Clp protease proteolytic subunit</fullName>
        <ecNumber evidence="1">3.4.21.92</ecNumber>
    </recommendedName>
    <alternativeName>
        <fullName evidence="1">Endopeptidase Clp</fullName>
    </alternativeName>
</protein>
<gene>
    <name evidence="1" type="primary">clpP</name>
</gene>
<geneLocation type="chloroplast"/>
<reference key="1">
    <citation type="journal article" date="1988" name="J. Mol. Biol.">
        <title>Structure and organization of Marchantia polymorpha chloroplast genome. III. Gene organization of the large single copy region from rbcL to trnI(CAU).</title>
        <authorList>
            <person name="Fukuzawa H."/>
            <person name="Kohchi T."/>
            <person name="Sano T."/>
            <person name="Shirai H."/>
            <person name="Umesono K."/>
            <person name="Inokuchi H."/>
            <person name="Ozeki H."/>
            <person name="Ohyama K."/>
        </authorList>
    </citation>
    <scope>NUCLEOTIDE SEQUENCE [GENOMIC DNA]</scope>
</reference>
<reference key="2">
    <citation type="journal article" date="1986" name="Nature">
        <title>Chloroplast gene organization deduced from complete sequence of liverwort Marchantia polymorpha chloroplast DNA.</title>
        <authorList>
            <person name="Ohyama K."/>
            <person name="Fukuzawa H."/>
            <person name="Kohchi T."/>
            <person name="Shirai H."/>
            <person name="Sano T."/>
            <person name="Sano S."/>
            <person name="Umesono K."/>
            <person name="Shiki Y."/>
            <person name="Takeuchi M."/>
            <person name="Chang Z."/>
            <person name="Aota S."/>
            <person name="Inokuchi H."/>
            <person name="Ozeki H."/>
        </authorList>
    </citation>
    <scope>NUCLEOTIDE SEQUENCE [LARGE SCALE GENOMIC DNA]</scope>
</reference>
<reference key="3">
    <citation type="journal article" date="1986" name="FEBS Lett.">
        <title>Coding sequences for chloroplast ribosomal protein S12 from the liverwort, Marchantia polymorpha, are separated far apart on the different DNA strands.</title>
        <authorList>
            <person name="Fukuzawa H."/>
            <person name="Kohchi T."/>
            <person name="Shirai H."/>
            <person name="Ohyama K."/>
            <person name="Umesono K."/>
            <person name="Inokuchi H."/>
            <person name="Ozeki H."/>
        </authorList>
    </citation>
    <scope>NUCLEOTIDE SEQUENCE [GENOMIC DNA] OF 184-203</scope>
</reference>
<evidence type="ECO:0000255" key="1">
    <source>
        <dbReference type="HAMAP-Rule" id="MF_00444"/>
    </source>
</evidence>
<evidence type="ECO:0000305" key="2"/>
<sequence>MPIGVPKVPFRLPGEEDAVWIDVYNRLYRERLLFLGQQVDDEIANQLIGIMMYLNGEDESKDMYLYINSPGGAVLAGISVYDAMQFVVPDVHTICMGLAASMGSFILTGGEITKRIALPHARVMIHQPASSYYDGQAGECIMEAEEVLKLRDCITKVYVQRTGKPLWVISEDMERDVFMSAKEAKLYGIVDLVAIENNSTIKN</sequence>